<dbReference type="EMBL" id="AF150097">
    <property type="protein sequence ID" value="AAD40003.1"/>
    <property type="molecule type" value="mRNA"/>
</dbReference>
<dbReference type="EMBL" id="AACD01000007">
    <property type="protein sequence ID" value="EAA66528.1"/>
    <property type="molecule type" value="Genomic_DNA"/>
</dbReference>
<dbReference type="EMBL" id="BN001308">
    <property type="protein sequence ID" value="CBF89502.1"/>
    <property type="molecule type" value="Genomic_DNA"/>
</dbReference>
<dbReference type="RefSeq" id="XP_658033.1">
    <property type="nucleotide sequence ID" value="XM_652941.1"/>
</dbReference>
<dbReference type="SMR" id="Q9Y8A8"/>
<dbReference type="FunCoup" id="Q9Y8A8">
    <property type="interactions" value="650"/>
</dbReference>
<dbReference type="STRING" id="227321.Q9Y8A8"/>
<dbReference type="EnsemblFungi" id="CBF89502">
    <property type="protein sequence ID" value="CBF89502"/>
    <property type="gene ID" value="ANIA_00429"/>
</dbReference>
<dbReference type="KEGG" id="ani:ANIA_00429"/>
<dbReference type="VEuPathDB" id="FungiDB:AN0429"/>
<dbReference type="eggNOG" id="KOG3480">
    <property type="taxonomic scope" value="Eukaryota"/>
</dbReference>
<dbReference type="HOGENOM" id="CLU_162151_1_0_1"/>
<dbReference type="InParanoid" id="Q9Y8A8"/>
<dbReference type="OMA" id="VGENMQK"/>
<dbReference type="OrthoDB" id="274922at2759"/>
<dbReference type="Proteomes" id="UP000000560">
    <property type="component" value="Chromosome VIII"/>
</dbReference>
<dbReference type="GO" id="GO:0005743">
    <property type="term" value="C:mitochondrial inner membrane"/>
    <property type="evidence" value="ECO:0000318"/>
    <property type="project" value="GO_Central"/>
</dbReference>
<dbReference type="GO" id="GO:0042719">
    <property type="term" value="C:mitochondrial intermembrane space protein transporter complex"/>
    <property type="evidence" value="ECO:0007669"/>
    <property type="project" value="EnsemblFungi"/>
</dbReference>
<dbReference type="GO" id="GO:0042721">
    <property type="term" value="C:TIM22 mitochondrial import inner membrane insertion complex"/>
    <property type="evidence" value="ECO:0007669"/>
    <property type="project" value="EnsemblFungi"/>
</dbReference>
<dbReference type="GO" id="GO:0046872">
    <property type="term" value="F:metal ion binding"/>
    <property type="evidence" value="ECO:0007669"/>
    <property type="project" value="UniProtKB-KW"/>
</dbReference>
<dbReference type="GO" id="GO:0140318">
    <property type="term" value="F:protein transporter activity"/>
    <property type="evidence" value="ECO:0007669"/>
    <property type="project" value="EnsemblFungi"/>
</dbReference>
<dbReference type="GO" id="GO:0051082">
    <property type="term" value="F:unfolded protein binding"/>
    <property type="evidence" value="ECO:0007669"/>
    <property type="project" value="EnsemblFungi"/>
</dbReference>
<dbReference type="GO" id="GO:0045039">
    <property type="term" value="P:protein insertion into mitochondrial inner membrane"/>
    <property type="evidence" value="ECO:0000318"/>
    <property type="project" value="GO_Central"/>
</dbReference>
<dbReference type="FunFam" id="1.10.287.810:FF:000002">
    <property type="entry name" value="Mitochondrial import inner membrane translocase subunit tim10"/>
    <property type="match status" value="1"/>
</dbReference>
<dbReference type="Gene3D" id="1.10.287.810">
    <property type="entry name" value="Mitochondrial import inner membrane translocase subunit tim13 like domains"/>
    <property type="match status" value="1"/>
</dbReference>
<dbReference type="InterPro" id="IPR004217">
    <property type="entry name" value="Tim10-like"/>
</dbReference>
<dbReference type="InterPro" id="IPR035427">
    <property type="entry name" value="Tim10-like_dom_sf"/>
</dbReference>
<dbReference type="PANTHER" id="PTHR11038">
    <property type="entry name" value="MITOCHONDRIAL IMPORT INNER MEMBRANE TRANSLOCASE SUBUNIT TIM10"/>
    <property type="match status" value="1"/>
</dbReference>
<dbReference type="PANTHER" id="PTHR11038:SF16">
    <property type="entry name" value="MITOCHONDRIAL IMPORT INNER MEMBRANE TRANSLOCASE SUBUNIT TIM10"/>
    <property type="match status" value="1"/>
</dbReference>
<dbReference type="Pfam" id="PF02953">
    <property type="entry name" value="zf-Tim10_DDP"/>
    <property type="match status" value="1"/>
</dbReference>
<dbReference type="SUPFAM" id="SSF144122">
    <property type="entry name" value="Tim10-like"/>
    <property type="match status" value="1"/>
</dbReference>
<feature type="chain" id="PRO_0000193618" description="Mitochondrial import inner membrane translocase subunit tim10">
    <location>
        <begin position="1"/>
        <end position="93"/>
    </location>
</feature>
<feature type="short sequence motif" description="Twin CX3C motif">
    <location>
        <begin position="38"/>
        <end position="63"/>
    </location>
</feature>
<feature type="disulfide bond" evidence="1">
    <location>
        <begin position="38"/>
        <end position="63"/>
    </location>
</feature>
<feature type="disulfide bond" evidence="1">
    <location>
        <begin position="42"/>
        <end position="59"/>
    </location>
</feature>
<proteinExistence type="inferred from homology"/>
<accession>Q9Y8A8</accession>
<accession>C8VTF4</accession>
<accession>Q5BGA1</accession>
<organism>
    <name type="scientific">Emericella nidulans (strain FGSC A4 / ATCC 38163 / CBS 112.46 / NRRL 194 / M139)</name>
    <name type="common">Aspergillus nidulans</name>
    <dbReference type="NCBI Taxonomy" id="227321"/>
    <lineage>
        <taxon>Eukaryota</taxon>
        <taxon>Fungi</taxon>
        <taxon>Dikarya</taxon>
        <taxon>Ascomycota</taxon>
        <taxon>Pezizomycotina</taxon>
        <taxon>Eurotiomycetes</taxon>
        <taxon>Eurotiomycetidae</taxon>
        <taxon>Eurotiales</taxon>
        <taxon>Aspergillaceae</taxon>
        <taxon>Aspergillus</taxon>
        <taxon>Aspergillus subgen. Nidulantes</taxon>
    </lineage>
</organism>
<evidence type="ECO:0000250" key="1"/>
<evidence type="ECO:0000305" key="2"/>
<name>TIM10_EMENI</name>
<protein>
    <recommendedName>
        <fullName>Mitochondrial import inner membrane translocase subunit tim10</fullName>
    </recommendedName>
</protein>
<sequence>MSFLFGGAPKMSSEQKIAAAETEVEMITDMFNRLSESCSKKCIPNDYREGDLNKGESVCLDRCVGKFFEVNIKVSEKMQGVAGQQQGGAGLSL</sequence>
<keyword id="KW-0143">Chaperone</keyword>
<keyword id="KW-1015">Disulfide bond</keyword>
<keyword id="KW-0472">Membrane</keyword>
<keyword id="KW-0479">Metal-binding</keyword>
<keyword id="KW-0496">Mitochondrion</keyword>
<keyword id="KW-0999">Mitochondrion inner membrane</keyword>
<keyword id="KW-0653">Protein transport</keyword>
<keyword id="KW-1185">Reference proteome</keyword>
<keyword id="KW-0811">Translocation</keyword>
<keyword id="KW-0813">Transport</keyword>
<keyword id="KW-0862">Zinc</keyword>
<comment type="function">
    <text evidence="1">Mitochondrial intermembrane chaperone that participates in the import and insertion of multi-pass transmembrane proteins into the mitochondrial inner membrane. Also required for the transfer of beta-barrel precursors from the TOM complex to the sorting and assembly machinery (SAM complex) of the outer membrane. Acts as a chaperone-like protein that protects the hydrophobic precursors from aggregation and guide them through the mitochondrial intermembrane space (By similarity).</text>
</comment>
<comment type="subunit">
    <text evidence="1">Heterohexamer; composed of 3 copies of TIM9 and 3 copies of TIM10, named soluble 70 kDa complex. Associates directly with the TIM22 complex, whose core is composed of TIM22 and TIM54. Interacts with the transmembrane regions of multi-pass transmembrane proteins in transit (By similarity).</text>
</comment>
<comment type="subcellular location">
    <subcellularLocation>
        <location evidence="1">Mitochondrion inner membrane</location>
        <topology evidence="1">Peripheral membrane protein</topology>
        <orientation evidence="1">Intermembrane side</orientation>
    </subcellularLocation>
</comment>
<comment type="domain">
    <text evidence="1">The twin CX3C motif contains 4 conserved Cys residues that form 2 disulfide bonds in the mitochondrial intermembrane space. However, during the transit of TIM10 from cytoplasm into mitochondrion, the Cys residues probably coordinate zinc, thereby preventing folding and allowing its transfer across mitochondrial outer membrane (By similarity).</text>
</comment>
<comment type="similarity">
    <text evidence="2">Belongs to the small Tim family.</text>
</comment>
<gene>
    <name type="primary">tim10</name>
    <name type="ORF">AN0429</name>
</gene>
<reference key="1">
    <citation type="journal article" date="1999" name="FEBS Lett.">
        <title>The mitochondrial TIM22 preprotein translocase is highly conserved throughout the eukaryotic kingdom.</title>
        <authorList>
            <person name="Bauer M.F."/>
            <person name="Rothbauer U."/>
            <person name="Muehlenbein N."/>
            <person name="Smith R.J.H."/>
            <person name="Gerbitz K.-D."/>
            <person name="Neupert W."/>
            <person name="Brunner M."/>
            <person name="Hofmann S."/>
        </authorList>
    </citation>
    <scope>NUCLEOTIDE SEQUENCE [MRNA]</scope>
</reference>
<reference key="2">
    <citation type="journal article" date="2005" name="Nature">
        <title>Sequencing of Aspergillus nidulans and comparative analysis with A. fumigatus and A. oryzae.</title>
        <authorList>
            <person name="Galagan J.E."/>
            <person name="Calvo S.E."/>
            <person name="Cuomo C."/>
            <person name="Ma L.-J."/>
            <person name="Wortman J.R."/>
            <person name="Batzoglou S."/>
            <person name="Lee S.-I."/>
            <person name="Bastuerkmen M."/>
            <person name="Spevak C.C."/>
            <person name="Clutterbuck J."/>
            <person name="Kapitonov V."/>
            <person name="Jurka J."/>
            <person name="Scazzocchio C."/>
            <person name="Farman M.L."/>
            <person name="Butler J."/>
            <person name="Purcell S."/>
            <person name="Harris S."/>
            <person name="Braus G.H."/>
            <person name="Draht O."/>
            <person name="Busch S."/>
            <person name="D'Enfert C."/>
            <person name="Bouchier C."/>
            <person name="Goldman G.H."/>
            <person name="Bell-Pedersen D."/>
            <person name="Griffiths-Jones S."/>
            <person name="Doonan J.H."/>
            <person name="Yu J."/>
            <person name="Vienken K."/>
            <person name="Pain A."/>
            <person name="Freitag M."/>
            <person name="Selker E.U."/>
            <person name="Archer D.B."/>
            <person name="Penalva M.A."/>
            <person name="Oakley B.R."/>
            <person name="Momany M."/>
            <person name="Tanaka T."/>
            <person name="Kumagai T."/>
            <person name="Asai K."/>
            <person name="Machida M."/>
            <person name="Nierman W.C."/>
            <person name="Denning D.W."/>
            <person name="Caddick M.X."/>
            <person name="Hynes M."/>
            <person name="Paoletti M."/>
            <person name="Fischer R."/>
            <person name="Miller B.L."/>
            <person name="Dyer P.S."/>
            <person name="Sachs M.S."/>
            <person name="Osmani S.A."/>
            <person name="Birren B.W."/>
        </authorList>
    </citation>
    <scope>NUCLEOTIDE SEQUENCE [LARGE SCALE GENOMIC DNA]</scope>
    <source>
        <strain>FGSC A4 / ATCC 38163 / CBS 112.46 / NRRL 194 / M139</strain>
    </source>
</reference>
<reference key="3">
    <citation type="journal article" date="2009" name="Fungal Genet. Biol.">
        <title>The 2008 update of the Aspergillus nidulans genome annotation: a community effort.</title>
        <authorList>
            <person name="Wortman J.R."/>
            <person name="Gilsenan J.M."/>
            <person name="Joardar V."/>
            <person name="Deegan J."/>
            <person name="Clutterbuck J."/>
            <person name="Andersen M.R."/>
            <person name="Archer D."/>
            <person name="Bencina M."/>
            <person name="Braus G."/>
            <person name="Coutinho P."/>
            <person name="von Dohren H."/>
            <person name="Doonan J."/>
            <person name="Driessen A.J."/>
            <person name="Durek P."/>
            <person name="Espeso E."/>
            <person name="Fekete E."/>
            <person name="Flipphi M."/>
            <person name="Estrada C.G."/>
            <person name="Geysens S."/>
            <person name="Goldman G."/>
            <person name="de Groot P.W."/>
            <person name="Hansen K."/>
            <person name="Harris S.D."/>
            <person name="Heinekamp T."/>
            <person name="Helmstaedt K."/>
            <person name="Henrissat B."/>
            <person name="Hofmann G."/>
            <person name="Homan T."/>
            <person name="Horio T."/>
            <person name="Horiuchi H."/>
            <person name="James S."/>
            <person name="Jones M."/>
            <person name="Karaffa L."/>
            <person name="Karanyi Z."/>
            <person name="Kato M."/>
            <person name="Keller N."/>
            <person name="Kelly D.E."/>
            <person name="Kiel J.A."/>
            <person name="Kim J.M."/>
            <person name="van der Klei I.J."/>
            <person name="Klis F.M."/>
            <person name="Kovalchuk A."/>
            <person name="Krasevec N."/>
            <person name="Kubicek C.P."/>
            <person name="Liu B."/>
            <person name="Maccabe A."/>
            <person name="Meyer V."/>
            <person name="Mirabito P."/>
            <person name="Miskei M."/>
            <person name="Mos M."/>
            <person name="Mullins J."/>
            <person name="Nelson D.R."/>
            <person name="Nielsen J."/>
            <person name="Oakley B.R."/>
            <person name="Osmani S.A."/>
            <person name="Pakula T."/>
            <person name="Paszewski A."/>
            <person name="Paulsen I."/>
            <person name="Pilsyk S."/>
            <person name="Pocsi I."/>
            <person name="Punt P.J."/>
            <person name="Ram A.F."/>
            <person name="Ren Q."/>
            <person name="Robellet X."/>
            <person name="Robson G."/>
            <person name="Seiboth B."/>
            <person name="van Solingen P."/>
            <person name="Specht T."/>
            <person name="Sun J."/>
            <person name="Taheri-Talesh N."/>
            <person name="Takeshita N."/>
            <person name="Ussery D."/>
            <person name="vanKuyk P.A."/>
            <person name="Visser H."/>
            <person name="van de Vondervoort P.J."/>
            <person name="de Vries R.P."/>
            <person name="Walton J."/>
            <person name="Xiang X."/>
            <person name="Xiong Y."/>
            <person name="Zeng A.P."/>
            <person name="Brandt B.W."/>
            <person name="Cornell M.J."/>
            <person name="van den Hondel C.A."/>
            <person name="Visser J."/>
            <person name="Oliver S.G."/>
            <person name="Turner G."/>
        </authorList>
    </citation>
    <scope>GENOME REANNOTATION</scope>
    <source>
        <strain>FGSC A4 / ATCC 38163 / CBS 112.46 / NRRL 194 / M139</strain>
    </source>
</reference>